<organism>
    <name type="scientific">Fusarium heterosporum</name>
    <dbReference type="NCBI Taxonomy" id="42747"/>
    <lineage>
        <taxon>Eukaryota</taxon>
        <taxon>Fungi</taxon>
        <taxon>Dikarya</taxon>
        <taxon>Ascomycota</taxon>
        <taxon>Pezizomycotina</taxon>
        <taxon>Sordariomycetes</taxon>
        <taxon>Hypocreomycetidae</taxon>
        <taxon>Hypocreales</taxon>
        <taxon>Nectriaceae</taxon>
        <taxon>Fusarium</taxon>
        <taxon>Fusarium heterosporum species complex</taxon>
    </lineage>
</organism>
<proteinExistence type="inferred from homology"/>
<accession>S4W4F3</accession>
<keyword id="KW-0521">NADP</keyword>
<keyword id="KW-0547">Nucleotide-binding</keyword>
<keyword id="KW-0560">Oxidoreductase</keyword>
<protein>
    <recommendedName>
        <fullName evidence="6">Trans-enoyl reductase eqxC</fullName>
        <ecNumber evidence="8">1.-.-.-</ecNumber>
    </recommendedName>
    <alternativeName>
        <fullName evidence="6">Equisetin biosynthesis protein C</fullName>
    </alternativeName>
</protein>
<name>EQXC_FUSHE</name>
<gene>
    <name evidence="6" type="primary">eqxC</name>
</gene>
<feature type="chain" id="PRO_0000441296" description="Trans-enoyl reductase eqxC">
    <location>
        <begin position="1"/>
        <end position="353"/>
    </location>
</feature>
<feature type="binding site" evidence="2">
    <location>
        <begin position="45"/>
        <end position="48"/>
    </location>
    <ligand>
        <name>NADP(+)</name>
        <dbReference type="ChEBI" id="CHEBI:58349"/>
    </ligand>
</feature>
<feature type="binding site" evidence="3">
    <location>
        <begin position="131"/>
        <end position="138"/>
    </location>
    <ligand>
        <name>substrate</name>
    </ligand>
</feature>
<feature type="binding site" evidence="2">
    <location>
        <begin position="166"/>
        <end position="169"/>
    </location>
    <ligand>
        <name>NADP(+)</name>
        <dbReference type="ChEBI" id="CHEBI:58349"/>
    </ligand>
</feature>
<feature type="binding site" evidence="2">
    <location>
        <begin position="189"/>
        <end position="192"/>
    </location>
    <ligand>
        <name>NADP(+)</name>
        <dbReference type="ChEBI" id="CHEBI:58349"/>
    </ligand>
</feature>
<feature type="binding site" evidence="2">
    <location>
        <position position="207"/>
    </location>
    <ligand>
        <name>NADP(+)</name>
        <dbReference type="ChEBI" id="CHEBI:58349"/>
    </ligand>
</feature>
<feature type="binding site" evidence="2">
    <location>
        <begin position="254"/>
        <end position="255"/>
    </location>
    <ligand>
        <name>NADP(+)</name>
        <dbReference type="ChEBI" id="CHEBI:58349"/>
    </ligand>
</feature>
<feature type="binding site" evidence="3">
    <location>
        <begin position="275"/>
        <end position="279"/>
    </location>
    <ligand>
        <name>substrate</name>
    </ligand>
</feature>
<feature type="binding site" evidence="2">
    <location>
        <begin position="344"/>
        <end position="345"/>
    </location>
    <ligand>
        <name>NADP(+)</name>
        <dbReference type="ChEBI" id="CHEBI:58349"/>
    </ligand>
</feature>
<reference key="1">
    <citation type="journal article" date="2013" name="ACS Chem. Biol.">
        <title>Two related pyrrolidinedione synthetase loci in Fusarium heterosporum ATCC 74349 produce divergent metabolites.</title>
        <authorList>
            <person name="Kakule T.B."/>
            <person name="Sardar D."/>
            <person name="Lin Z."/>
            <person name="Schmidt E.W."/>
        </authorList>
    </citation>
    <scope>NUCLEOTIDE SEQUENCE [GENOMIC DNA]</scope>
    <scope>FUNCTION</scope>
    <scope>DISRUPTION PHENOTYPE</scope>
    <scope>PATHWAY</scope>
    <source>
        <strain>ATCC 74349 / MF6069</strain>
    </source>
</reference>
<reference key="2">
    <citation type="journal article" date="2008" name="J. Am. Chem. Soc.">
        <title>Thioesterase-like role for fungal PKS-NRPS hybrid reductive domains.</title>
        <authorList>
            <person name="Sims J.W."/>
            <person name="Schmidt E.W."/>
        </authorList>
    </citation>
    <scope>FUNCTION</scope>
</reference>
<evidence type="ECO:0000250" key="1">
    <source>
        <dbReference type="UniProtKB" id="A0A0E4AZP0"/>
    </source>
</evidence>
<evidence type="ECO:0000250" key="2">
    <source>
        <dbReference type="UniProtKB" id="Q9Y7D0"/>
    </source>
</evidence>
<evidence type="ECO:0000255" key="3"/>
<evidence type="ECO:0000269" key="4">
    <source>
    </source>
</evidence>
<evidence type="ECO:0000269" key="5">
    <source>
    </source>
</evidence>
<evidence type="ECO:0000303" key="6">
    <source>
    </source>
</evidence>
<evidence type="ECO:0000305" key="7"/>
<evidence type="ECO:0000305" key="8">
    <source>
    </source>
</evidence>
<sequence length="353" mass="38056">MVQRQQTALVGTHDGGIRLSSTETIPDIAGDSVLIKTKAVSVNPVDTKMIGPYVTPGAVAGFDFAGVVEMVGPDATKCDIRVGDRVCTAIMGMNPLDPTVGAFAEYTAAVEWILLKIPPSLSFQEGASLGISFMTTGLALFKSLGLPGNPLSPATEKLPVLVYGGSSATGTAAIQLVRLAGFAPITTCSPRNFELVKSYGASAVFDYNDPNCISDIKKHTKNNIRYALDCISTTQSMQFCYQAIGRAGGKYTALEPYSEAVARTRKMVKPDWIMGPQMLGKEIRWPEPHWRPANAEMGEFGVYWTAVLNKLLENDLIRPHAIVVREGGLEKVLDGIEDIRAKKISGKKLVFTL</sequence>
<comment type="function">
    <text evidence="1 4 5">Trans-enoyl reductase; part of the gene cluster that mediates the biosynthesis of equisetin, a trans-fused decalin-containing tetramic acid with antimicrobial activity (PubMed:23614392). The PKS module of eqxS together with the enoylreductase eqxC catalyze the formation of the polyketide unit which is then conjugated to L-serine by the condensation domain of the eqxS NRPS module (PubMed:23614392). Activity of the Dieckmann cyclase domain (RED) results in release of the Dieckmann product intermediate (PubMed:18652469, PubMed:23614392). Diels-Alderase eqx3 is involved in endo-selective Diels-Alder cycloaddition to form the decalin ring, leading to the production of N-desmethylequisetin also called trichosetin (By similarity). Subsequent N-methylation is carried out by eqxD to give equisetin (PubMed:23614392).</text>
</comment>
<comment type="catalytic activity">
    <reaction evidence="8">
        <text>L-serine + 7 malonyl-CoA + acetyl-CoA + 2 S-adenosyl-L-methionine + ATP + 8 NADPH + 11 H(+) = (5S)-3-[(2E,6R,8E,10E,12E)-2,6-dimethyltetradeca-2,8,10,12-tetraenoyl]-5-(hydroxymethyl)pyrrolidine-2,4-dione + AMP + 2 S-adenosyl-L-homocysteine + 7 CO2 + diphosphate + 8 NADP(+) + 8 CoA + 6 H2O</text>
        <dbReference type="Rhea" id="RHEA:67324"/>
        <dbReference type="ChEBI" id="CHEBI:15377"/>
        <dbReference type="ChEBI" id="CHEBI:15378"/>
        <dbReference type="ChEBI" id="CHEBI:16526"/>
        <dbReference type="ChEBI" id="CHEBI:30616"/>
        <dbReference type="ChEBI" id="CHEBI:33019"/>
        <dbReference type="ChEBI" id="CHEBI:33384"/>
        <dbReference type="ChEBI" id="CHEBI:57287"/>
        <dbReference type="ChEBI" id="CHEBI:57288"/>
        <dbReference type="ChEBI" id="CHEBI:57384"/>
        <dbReference type="ChEBI" id="CHEBI:57783"/>
        <dbReference type="ChEBI" id="CHEBI:57856"/>
        <dbReference type="ChEBI" id="CHEBI:58349"/>
        <dbReference type="ChEBI" id="CHEBI:59789"/>
        <dbReference type="ChEBI" id="CHEBI:169938"/>
        <dbReference type="ChEBI" id="CHEBI:456215"/>
    </reaction>
    <physiologicalReaction direction="left-to-right" evidence="8">
        <dbReference type="Rhea" id="RHEA:67325"/>
    </physiologicalReaction>
</comment>
<comment type="pathway">
    <text evidence="5">Mycotoxin biosynthesis.</text>
</comment>
<comment type="subunit">
    <text evidence="2">Monomer.</text>
</comment>
<comment type="disruption phenotype">
    <text evidence="5">Abolishes the production of equisetin and accumulates the intermediate trichosetin (PubMed:23614392).</text>
</comment>
<comment type="similarity">
    <text evidence="7">Belongs to the zinc-containing alcohol dehydrogenase family.</text>
</comment>
<dbReference type="EC" id="1.-.-.-" evidence="8"/>
<dbReference type="EMBL" id="KC439347">
    <property type="protein sequence ID" value="AGO86659.1"/>
    <property type="molecule type" value="Genomic_DNA"/>
</dbReference>
<dbReference type="SMR" id="S4W4F3"/>
<dbReference type="BioCyc" id="MetaCyc:MONOMER-19332"/>
<dbReference type="GO" id="GO:0000166">
    <property type="term" value="F:nucleotide binding"/>
    <property type="evidence" value="ECO:0007669"/>
    <property type="project" value="UniProtKB-KW"/>
</dbReference>
<dbReference type="GO" id="GO:0016651">
    <property type="term" value="F:oxidoreductase activity, acting on NAD(P)H"/>
    <property type="evidence" value="ECO:0007669"/>
    <property type="project" value="InterPro"/>
</dbReference>
<dbReference type="CDD" id="cd08249">
    <property type="entry name" value="enoyl_reductase_like"/>
    <property type="match status" value="1"/>
</dbReference>
<dbReference type="Gene3D" id="3.90.180.10">
    <property type="entry name" value="Medium-chain alcohol dehydrogenases, catalytic domain"/>
    <property type="match status" value="1"/>
</dbReference>
<dbReference type="Gene3D" id="3.40.50.720">
    <property type="entry name" value="NAD(P)-binding Rossmann-like Domain"/>
    <property type="match status" value="1"/>
</dbReference>
<dbReference type="InterPro" id="IPR013149">
    <property type="entry name" value="ADH-like_C"/>
</dbReference>
<dbReference type="InterPro" id="IPR013154">
    <property type="entry name" value="ADH-like_N"/>
</dbReference>
<dbReference type="InterPro" id="IPR011032">
    <property type="entry name" value="GroES-like_sf"/>
</dbReference>
<dbReference type="InterPro" id="IPR036291">
    <property type="entry name" value="NAD(P)-bd_dom_sf"/>
</dbReference>
<dbReference type="InterPro" id="IPR020843">
    <property type="entry name" value="PKS_ER"/>
</dbReference>
<dbReference type="InterPro" id="IPR047122">
    <property type="entry name" value="Trans-enoyl_RdTase-like"/>
</dbReference>
<dbReference type="PANTHER" id="PTHR45348">
    <property type="entry name" value="HYPOTHETICAL OXIDOREDUCTASE (EUROFUNG)"/>
    <property type="match status" value="1"/>
</dbReference>
<dbReference type="PANTHER" id="PTHR45348:SF1">
    <property type="entry name" value="TRANS-ENOYL REDUCTASE STHE"/>
    <property type="match status" value="1"/>
</dbReference>
<dbReference type="Pfam" id="PF08240">
    <property type="entry name" value="ADH_N"/>
    <property type="match status" value="1"/>
</dbReference>
<dbReference type="Pfam" id="PF00107">
    <property type="entry name" value="ADH_zinc_N"/>
    <property type="match status" value="1"/>
</dbReference>
<dbReference type="SMART" id="SM00829">
    <property type="entry name" value="PKS_ER"/>
    <property type="match status" value="1"/>
</dbReference>
<dbReference type="SUPFAM" id="SSF50129">
    <property type="entry name" value="GroES-like"/>
    <property type="match status" value="1"/>
</dbReference>
<dbReference type="SUPFAM" id="SSF51735">
    <property type="entry name" value="NAD(P)-binding Rossmann-fold domains"/>
    <property type="match status" value="1"/>
</dbReference>